<evidence type="ECO:0000250" key="1"/>
<evidence type="ECO:0000250" key="2">
    <source>
        <dbReference type="UniProtKB" id="P43251"/>
    </source>
</evidence>
<evidence type="ECO:0000255" key="3"/>
<evidence type="ECO:0000255" key="4">
    <source>
        <dbReference type="PROSITE-ProRule" id="PRU00054"/>
    </source>
</evidence>
<evidence type="ECO:0000269" key="5">
    <source>
    </source>
</evidence>
<evidence type="ECO:0000305" key="6"/>
<organism>
    <name type="scientific">Mus musculus</name>
    <name type="common">Mouse</name>
    <dbReference type="NCBI Taxonomy" id="10090"/>
    <lineage>
        <taxon>Eukaryota</taxon>
        <taxon>Metazoa</taxon>
        <taxon>Chordata</taxon>
        <taxon>Craniata</taxon>
        <taxon>Vertebrata</taxon>
        <taxon>Euteleostomi</taxon>
        <taxon>Mammalia</taxon>
        <taxon>Eutheria</taxon>
        <taxon>Euarchontoglires</taxon>
        <taxon>Glires</taxon>
        <taxon>Rodentia</taxon>
        <taxon>Myomorpha</taxon>
        <taxon>Muroidea</taxon>
        <taxon>Muridae</taxon>
        <taxon>Murinae</taxon>
        <taxon>Mus</taxon>
        <taxon>Mus</taxon>
    </lineage>
</organism>
<sequence length="520" mass="58154">MSGARTAPALFFLGCSALALGVSSASQEHREAEYYVAAVYEHPSVLSPNPLELVSRQEALELMKQNLDVYEQQVMAAAQKGVQIIVFPEDGIHGFNFTRTSIYPFLDFMPSPKLVRWNPCLEPFRFNDTEVLQRLSCMAIKGGMFLVANLGTKQPCLSSDPGCPQDGRYQFNTNVVFSDNGTLVDRYRKHNLYFEAAFDTPANVDLITFDTPFAGKFGVFTCFDILFFDPAVRLLRDFEVKHIVYPTAWMNQLPLLAAIEIQKAFATAFGVNVLAANIHHPTLGMTGSGIHTPLKSFWYHDMDDPKGHLIIAQVATNPQGLTGTGNTTSEMDPSHRKFLKILSGDPYCEKDAQEVHCDEAAKWNVNVPPTFHSEMMYDNFTLVPVWGTEGHLQVCSNSLCCHLLYERPTLSKELYALGVFDGLHTVHGTYYIQTCALVKCGGLGFDTCGQEITEAEGLFDFHLWGNFSTLYIFPLFLTSGMTLDTPDQLGWENDHYFLRKRGLSSGLVTAALYGRLYERK</sequence>
<name>BTD_MOUSE</name>
<keyword id="KW-0325">Glycoprotein</keyword>
<keyword id="KW-0378">Hydrolase</keyword>
<keyword id="KW-1185">Reference proteome</keyword>
<keyword id="KW-0964">Secreted</keyword>
<keyword id="KW-0732">Signal</keyword>
<accession>Q8CIF4</accession>
<accession>Q3UXQ4</accession>
<accession>Q9DAV0</accession>
<gene>
    <name type="primary">Btd</name>
</gene>
<feature type="signal peptide" evidence="1">
    <location>
        <begin position="1"/>
        <end position="21"/>
    </location>
</feature>
<feature type="chain" id="PRO_0000019708" description="Biotinidase">
    <location>
        <begin position="22"/>
        <end position="520"/>
    </location>
</feature>
<feature type="domain" description="CN hydrolase" evidence="4">
    <location>
        <begin position="49"/>
        <end position="333"/>
    </location>
</feature>
<feature type="active site" description="Proton acceptor" evidence="4">
    <location>
        <position position="89"/>
    </location>
</feature>
<feature type="active site" description="Proton donor" evidence="4">
    <location>
        <position position="189"/>
    </location>
</feature>
<feature type="active site" description="Nucleophile" evidence="4">
    <location>
        <position position="222"/>
    </location>
</feature>
<feature type="glycosylation site" description="N-linked (GlcNAc...) asparagine" evidence="3">
    <location>
        <position position="96"/>
    </location>
</feature>
<feature type="glycosylation site" description="N-linked (GlcNAc...) asparagine" evidence="5">
    <location>
        <position position="127"/>
    </location>
</feature>
<feature type="glycosylation site" description="N-linked (GlcNAc...) asparagine" evidence="3">
    <location>
        <position position="180"/>
    </location>
</feature>
<feature type="glycosylation site" description="N-linked (GlcNAc...) asparagine" evidence="3">
    <location>
        <position position="326"/>
    </location>
</feature>
<feature type="glycosylation site" description="N-linked (GlcNAc...) asparagine" evidence="3">
    <location>
        <position position="379"/>
    </location>
</feature>
<feature type="glycosylation site" description="N-linked (GlcNAc...) asparagine" evidence="3">
    <location>
        <position position="466"/>
    </location>
</feature>
<feature type="sequence conflict" description="In Ref. 1; BAE22509." evidence="6" ref="1">
    <original>G</original>
    <variation>V</variation>
    <location>
        <position position="81"/>
    </location>
</feature>
<comment type="function">
    <text evidence="2">Catalytic release of biotin from biocytin, the product of biotin-dependent carboxylases degradation.</text>
</comment>
<comment type="catalytic activity">
    <reaction evidence="2">
        <text>biocytin + H2O = biotin + L-lysine</text>
        <dbReference type="Rhea" id="RHEA:77171"/>
        <dbReference type="ChEBI" id="CHEBI:15377"/>
        <dbReference type="ChEBI" id="CHEBI:32551"/>
        <dbReference type="ChEBI" id="CHEBI:57586"/>
        <dbReference type="ChEBI" id="CHEBI:195545"/>
        <dbReference type="EC" id="3.5.1.12"/>
    </reaction>
</comment>
<comment type="catalytic activity">
    <reaction evidence="2">
        <text>biotin amide + H2O = biotin + NH4(+)</text>
        <dbReference type="Rhea" id="RHEA:13081"/>
        <dbReference type="ChEBI" id="CHEBI:15377"/>
        <dbReference type="ChEBI" id="CHEBI:16615"/>
        <dbReference type="ChEBI" id="CHEBI:28938"/>
        <dbReference type="ChEBI" id="CHEBI:57586"/>
    </reaction>
    <physiologicalReaction direction="left-to-right" evidence="2">
        <dbReference type="Rhea" id="RHEA:13082"/>
    </physiologicalReaction>
</comment>
<comment type="subcellular location">
    <subcellularLocation>
        <location evidence="2">Secreted</location>
        <location evidence="2">Extracellular space</location>
    </subcellularLocation>
</comment>
<comment type="similarity">
    <text evidence="6">Belongs to the carbon-nitrogen hydrolase superfamily. BTD/VNN family.</text>
</comment>
<comment type="sequence caution" evidence="6">
    <conflict type="erroneous initiation">
        <sequence resource="EMBL-CDS" id="AAH24051"/>
    </conflict>
    <text>Extended N-terminus.</text>
</comment>
<comment type="sequence caution" evidence="6">
    <conflict type="erroneous initiation">
        <sequence resource="EMBL-CDS" id="BAB24086"/>
    </conflict>
    <text>Extended N-terminus.</text>
</comment>
<comment type="sequence caution" evidence="6">
    <conflict type="erroneous initiation">
        <sequence resource="EMBL-CDS" id="BAE22509"/>
    </conflict>
    <text>Extended N-terminus.</text>
</comment>
<proteinExistence type="evidence at protein level"/>
<protein>
    <recommendedName>
        <fullName>Biotinidase</fullName>
        <shortName>Biotinase</shortName>
        <ecNumber evidence="2">3.5.1.12</ecNumber>
    </recommendedName>
</protein>
<reference key="1">
    <citation type="journal article" date="2005" name="Science">
        <title>The transcriptional landscape of the mammalian genome.</title>
        <authorList>
            <person name="Carninci P."/>
            <person name="Kasukawa T."/>
            <person name="Katayama S."/>
            <person name="Gough J."/>
            <person name="Frith M.C."/>
            <person name="Maeda N."/>
            <person name="Oyama R."/>
            <person name="Ravasi T."/>
            <person name="Lenhard B."/>
            <person name="Wells C."/>
            <person name="Kodzius R."/>
            <person name="Shimokawa K."/>
            <person name="Bajic V.B."/>
            <person name="Brenner S.E."/>
            <person name="Batalov S."/>
            <person name="Forrest A.R."/>
            <person name="Zavolan M."/>
            <person name="Davis M.J."/>
            <person name="Wilming L.G."/>
            <person name="Aidinis V."/>
            <person name="Allen J.E."/>
            <person name="Ambesi-Impiombato A."/>
            <person name="Apweiler R."/>
            <person name="Aturaliya R.N."/>
            <person name="Bailey T.L."/>
            <person name="Bansal M."/>
            <person name="Baxter L."/>
            <person name="Beisel K.W."/>
            <person name="Bersano T."/>
            <person name="Bono H."/>
            <person name="Chalk A.M."/>
            <person name="Chiu K.P."/>
            <person name="Choudhary V."/>
            <person name="Christoffels A."/>
            <person name="Clutterbuck D.R."/>
            <person name="Crowe M.L."/>
            <person name="Dalla E."/>
            <person name="Dalrymple B.P."/>
            <person name="de Bono B."/>
            <person name="Della Gatta G."/>
            <person name="di Bernardo D."/>
            <person name="Down T."/>
            <person name="Engstrom P."/>
            <person name="Fagiolini M."/>
            <person name="Faulkner G."/>
            <person name="Fletcher C.F."/>
            <person name="Fukushima T."/>
            <person name="Furuno M."/>
            <person name="Futaki S."/>
            <person name="Gariboldi M."/>
            <person name="Georgii-Hemming P."/>
            <person name="Gingeras T.R."/>
            <person name="Gojobori T."/>
            <person name="Green R.E."/>
            <person name="Gustincich S."/>
            <person name="Harbers M."/>
            <person name="Hayashi Y."/>
            <person name="Hensch T.K."/>
            <person name="Hirokawa N."/>
            <person name="Hill D."/>
            <person name="Huminiecki L."/>
            <person name="Iacono M."/>
            <person name="Ikeo K."/>
            <person name="Iwama A."/>
            <person name="Ishikawa T."/>
            <person name="Jakt M."/>
            <person name="Kanapin A."/>
            <person name="Katoh M."/>
            <person name="Kawasawa Y."/>
            <person name="Kelso J."/>
            <person name="Kitamura H."/>
            <person name="Kitano H."/>
            <person name="Kollias G."/>
            <person name="Krishnan S.P."/>
            <person name="Kruger A."/>
            <person name="Kummerfeld S.K."/>
            <person name="Kurochkin I.V."/>
            <person name="Lareau L.F."/>
            <person name="Lazarevic D."/>
            <person name="Lipovich L."/>
            <person name="Liu J."/>
            <person name="Liuni S."/>
            <person name="McWilliam S."/>
            <person name="Madan Babu M."/>
            <person name="Madera M."/>
            <person name="Marchionni L."/>
            <person name="Matsuda H."/>
            <person name="Matsuzawa S."/>
            <person name="Miki H."/>
            <person name="Mignone F."/>
            <person name="Miyake S."/>
            <person name="Morris K."/>
            <person name="Mottagui-Tabar S."/>
            <person name="Mulder N."/>
            <person name="Nakano N."/>
            <person name="Nakauchi H."/>
            <person name="Ng P."/>
            <person name="Nilsson R."/>
            <person name="Nishiguchi S."/>
            <person name="Nishikawa S."/>
            <person name="Nori F."/>
            <person name="Ohara O."/>
            <person name="Okazaki Y."/>
            <person name="Orlando V."/>
            <person name="Pang K.C."/>
            <person name="Pavan W.J."/>
            <person name="Pavesi G."/>
            <person name="Pesole G."/>
            <person name="Petrovsky N."/>
            <person name="Piazza S."/>
            <person name="Reed J."/>
            <person name="Reid J.F."/>
            <person name="Ring B.Z."/>
            <person name="Ringwald M."/>
            <person name="Rost B."/>
            <person name="Ruan Y."/>
            <person name="Salzberg S.L."/>
            <person name="Sandelin A."/>
            <person name="Schneider C."/>
            <person name="Schoenbach C."/>
            <person name="Sekiguchi K."/>
            <person name="Semple C.A."/>
            <person name="Seno S."/>
            <person name="Sessa L."/>
            <person name="Sheng Y."/>
            <person name="Shibata Y."/>
            <person name="Shimada H."/>
            <person name="Shimada K."/>
            <person name="Silva D."/>
            <person name="Sinclair B."/>
            <person name="Sperling S."/>
            <person name="Stupka E."/>
            <person name="Sugiura K."/>
            <person name="Sultana R."/>
            <person name="Takenaka Y."/>
            <person name="Taki K."/>
            <person name="Tammoja K."/>
            <person name="Tan S.L."/>
            <person name="Tang S."/>
            <person name="Taylor M.S."/>
            <person name="Tegner J."/>
            <person name="Teichmann S.A."/>
            <person name="Ueda H.R."/>
            <person name="van Nimwegen E."/>
            <person name="Verardo R."/>
            <person name="Wei C.L."/>
            <person name="Yagi K."/>
            <person name="Yamanishi H."/>
            <person name="Zabarovsky E."/>
            <person name="Zhu S."/>
            <person name="Zimmer A."/>
            <person name="Hide W."/>
            <person name="Bult C."/>
            <person name="Grimmond S.M."/>
            <person name="Teasdale R.D."/>
            <person name="Liu E.T."/>
            <person name="Brusic V."/>
            <person name="Quackenbush J."/>
            <person name="Wahlestedt C."/>
            <person name="Mattick J.S."/>
            <person name="Hume D.A."/>
            <person name="Kai C."/>
            <person name="Sasaki D."/>
            <person name="Tomaru Y."/>
            <person name="Fukuda S."/>
            <person name="Kanamori-Katayama M."/>
            <person name="Suzuki M."/>
            <person name="Aoki J."/>
            <person name="Arakawa T."/>
            <person name="Iida J."/>
            <person name="Imamura K."/>
            <person name="Itoh M."/>
            <person name="Kato T."/>
            <person name="Kawaji H."/>
            <person name="Kawagashira N."/>
            <person name="Kawashima T."/>
            <person name="Kojima M."/>
            <person name="Kondo S."/>
            <person name="Konno H."/>
            <person name="Nakano K."/>
            <person name="Ninomiya N."/>
            <person name="Nishio T."/>
            <person name="Okada M."/>
            <person name="Plessy C."/>
            <person name="Shibata K."/>
            <person name="Shiraki T."/>
            <person name="Suzuki S."/>
            <person name="Tagami M."/>
            <person name="Waki K."/>
            <person name="Watahiki A."/>
            <person name="Okamura-Oho Y."/>
            <person name="Suzuki H."/>
            <person name="Kawai J."/>
            <person name="Hayashizaki Y."/>
        </authorList>
    </citation>
    <scope>NUCLEOTIDE SEQUENCE [LARGE SCALE MRNA]</scope>
    <source>
        <strain>C57BL/6J</strain>
        <tissue>Muellerian duct</tissue>
        <tissue>Placenta</tissue>
    </source>
</reference>
<reference key="2">
    <citation type="journal article" date="2004" name="Genome Res.">
        <title>The status, quality, and expansion of the NIH full-length cDNA project: the Mammalian Gene Collection (MGC).</title>
        <authorList>
            <consortium name="The MGC Project Team"/>
        </authorList>
    </citation>
    <scope>NUCLEOTIDE SEQUENCE [LARGE SCALE MRNA]</scope>
    <source>
        <strain>FVB/N</strain>
        <tissue>Liver</tissue>
    </source>
</reference>
<reference key="3">
    <citation type="journal article" date="2006" name="J. Proteome Res.">
        <title>Proteome-wide characterization of N-glycosylation events by diagonal chromatography.</title>
        <authorList>
            <person name="Ghesquiere B."/>
            <person name="Van Damme J."/>
            <person name="Martens L."/>
            <person name="Vandekerckhove J."/>
            <person name="Gevaert K."/>
        </authorList>
    </citation>
    <scope>GLYCOSYLATION [LARGE SCALE ANALYSIS] AT ASN-127</scope>
    <source>
        <strain>C57BL/6J</strain>
        <tissue>Plasma</tissue>
    </source>
</reference>
<reference key="4">
    <citation type="journal article" date="2010" name="Cell">
        <title>A tissue-specific atlas of mouse protein phosphorylation and expression.</title>
        <authorList>
            <person name="Huttlin E.L."/>
            <person name="Jedrychowski M.P."/>
            <person name="Elias J.E."/>
            <person name="Goswami T."/>
            <person name="Rad R."/>
            <person name="Beausoleil S.A."/>
            <person name="Villen J."/>
            <person name="Haas W."/>
            <person name="Sowa M.E."/>
            <person name="Gygi S.P."/>
        </authorList>
    </citation>
    <scope>IDENTIFICATION BY MASS SPECTROMETRY [LARGE SCALE ANALYSIS]</scope>
    <source>
        <tissue>Brown adipose tissue</tissue>
        <tissue>Kidney</tissue>
        <tissue>Liver</tissue>
        <tissue>Lung</tissue>
        <tissue>Testis</tissue>
    </source>
</reference>
<dbReference type="EC" id="3.5.1.12" evidence="2"/>
<dbReference type="EMBL" id="AK005506">
    <property type="protein sequence ID" value="BAB24086.1"/>
    <property type="status" value="ALT_INIT"/>
    <property type="molecule type" value="mRNA"/>
</dbReference>
<dbReference type="EMBL" id="AK135375">
    <property type="protein sequence ID" value="BAE22509.1"/>
    <property type="status" value="ALT_INIT"/>
    <property type="molecule type" value="mRNA"/>
</dbReference>
<dbReference type="EMBL" id="BC024051">
    <property type="protein sequence ID" value="AAH24051.2"/>
    <property type="status" value="ALT_INIT"/>
    <property type="molecule type" value="mRNA"/>
</dbReference>
<dbReference type="RefSeq" id="NP_079571.1">
    <property type="nucleotide sequence ID" value="NM_025295.4"/>
</dbReference>
<dbReference type="SMR" id="Q8CIF4"/>
<dbReference type="BioGRID" id="204923">
    <property type="interactions" value="17"/>
</dbReference>
<dbReference type="FunCoup" id="Q8CIF4">
    <property type="interactions" value="73"/>
</dbReference>
<dbReference type="STRING" id="10090.ENSMUSP00000087608"/>
<dbReference type="GlyConnect" id="2155">
    <property type="glycosylation" value="1 N-Linked glycan (1 site)"/>
</dbReference>
<dbReference type="GlyCosmos" id="Q8CIF4">
    <property type="glycosylation" value="6 sites, 1 glycan"/>
</dbReference>
<dbReference type="GlyGen" id="Q8CIF4">
    <property type="glycosylation" value="6 sites, 4 N-linked glycans (4 sites)"/>
</dbReference>
<dbReference type="iPTMnet" id="Q8CIF4"/>
<dbReference type="PhosphoSitePlus" id="Q8CIF4"/>
<dbReference type="jPOST" id="Q8CIF4"/>
<dbReference type="PaxDb" id="10090-ENSMUSP00000087608"/>
<dbReference type="PeptideAtlas" id="Q8CIF4"/>
<dbReference type="ProteomicsDB" id="273713"/>
<dbReference type="Pumba" id="Q8CIF4"/>
<dbReference type="DNASU" id="26363"/>
<dbReference type="GeneID" id="26363"/>
<dbReference type="KEGG" id="mmu:26363"/>
<dbReference type="UCSC" id="uc007sxy.2">
    <property type="organism name" value="mouse"/>
</dbReference>
<dbReference type="AGR" id="MGI:1347001"/>
<dbReference type="CTD" id="686"/>
<dbReference type="MGI" id="MGI:1347001">
    <property type="gene designation" value="Btd"/>
</dbReference>
<dbReference type="eggNOG" id="KOG0806">
    <property type="taxonomic scope" value="Eukaryota"/>
</dbReference>
<dbReference type="InParanoid" id="Q8CIF4"/>
<dbReference type="OrthoDB" id="10250282at2759"/>
<dbReference type="PhylomeDB" id="Q8CIF4"/>
<dbReference type="TreeFam" id="TF323645"/>
<dbReference type="Reactome" id="R-MMU-196780">
    <property type="pathway name" value="Biotin transport and metabolism"/>
</dbReference>
<dbReference type="SABIO-RK" id="Q8CIF4"/>
<dbReference type="BioGRID-ORCS" id="26363">
    <property type="hits" value="3 hits in 79 CRISPR screens"/>
</dbReference>
<dbReference type="ChiTaRS" id="Btd">
    <property type="organism name" value="mouse"/>
</dbReference>
<dbReference type="PRO" id="PR:Q8CIF4"/>
<dbReference type="Proteomes" id="UP000000589">
    <property type="component" value="Unplaced"/>
</dbReference>
<dbReference type="RNAct" id="Q8CIF4">
    <property type="molecule type" value="protein"/>
</dbReference>
<dbReference type="GO" id="GO:0045177">
    <property type="term" value="C:apical part of cell"/>
    <property type="evidence" value="ECO:0000314"/>
    <property type="project" value="MGI"/>
</dbReference>
<dbReference type="GO" id="GO:0005576">
    <property type="term" value="C:extracellular region"/>
    <property type="evidence" value="ECO:0000314"/>
    <property type="project" value="MGI"/>
</dbReference>
<dbReference type="GO" id="GO:0005615">
    <property type="term" value="C:extracellular space"/>
    <property type="evidence" value="ECO:0007005"/>
    <property type="project" value="BHF-UCL"/>
</dbReference>
<dbReference type="GO" id="GO:0005730">
    <property type="term" value="C:nucleolus"/>
    <property type="evidence" value="ECO:0000314"/>
    <property type="project" value="MGI"/>
</dbReference>
<dbReference type="GO" id="GO:0043204">
    <property type="term" value="C:perikaryon"/>
    <property type="evidence" value="ECO:0000314"/>
    <property type="project" value="MGI"/>
</dbReference>
<dbReference type="GO" id="GO:0047708">
    <property type="term" value="F:biotinidase activity"/>
    <property type="evidence" value="ECO:0000315"/>
    <property type="project" value="MGI"/>
</dbReference>
<dbReference type="GO" id="GO:0006768">
    <property type="term" value="P:biotin metabolic process"/>
    <property type="evidence" value="ECO:0000315"/>
    <property type="project" value="MGI"/>
</dbReference>
<dbReference type="CDD" id="cd07567">
    <property type="entry name" value="biotinidase_like"/>
    <property type="match status" value="1"/>
</dbReference>
<dbReference type="FunFam" id="3.60.110.10:FF:000001">
    <property type="entry name" value="biotinidase isoform X1"/>
    <property type="match status" value="1"/>
</dbReference>
<dbReference type="Gene3D" id="3.60.110.10">
    <property type="entry name" value="Carbon-nitrogen hydrolase"/>
    <property type="match status" value="1"/>
</dbReference>
<dbReference type="InterPro" id="IPR012101">
    <property type="entry name" value="Biotinidase-like_euk"/>
</dbReference>
<dbReference type="InterPro" id="IPR040154">
    <property type="entry name" value="Biotinidase/VNN"/>
</dbReference>
<dbReference type="InterPro" id="IPR003010">
    <property type="entry name" value="C-N_Hydrolase"/>
</dbReference>
<dbReference type="InterPro" id="IPR036526">
    <property type="entry name" value="C-N_Hydrolase_sf"/>
</dbReference>
<dbReference type="InterPro" id="IPR043957">
    <property type="entry name" value="Vanin_C"/>
</dbReference>
<dbReference type="PANTHER" id="PTHR10609:SF14">
    <property type="entry name" value="BIOTINIDASE"/>
    <property type="match status" value="1"/>
</dbReference>
<dbReference type="PANTHER" id="PTHR10609">
    <property type="entry name" value="BIOTINIDASE-RELATED"/>
    <property type="match status" value="1"/>
</dbReference>
<dbReference type="Pfam" id="PF00795">
    <property type="entry name" value="CN_hydrolase"/>
    <property type="match status" value="1"/>
</dbReference>
<dbReference type="Pfam" id="PF19018">
    <property type="entry name" value="Vanin_C"/>
    <property type="match status" value="1"/>
</dbReference>
<dbReference type="PIRSF" id="PIRSF011861">
    <property type="entry name" value="Biotinidase"/>
    <property type="match status" value="1"/>
</dbReference>
<dbReference type="SUPFAM" id="SSF56317">
    <property type="entry name" value="Carbon-nitrogen hydrolase"/>
    <property type="match status" value="1"/>
</dbReference>
<dbReference type="PROSITE" id="PS50263">
    <property type="entry name" value="CN_HYDROLASE"/>
    <property type="match status" value="1"/>
</dbReference>